<protein>
    <recommendedName>
        <fullName evidence="8">NAD-dependent protein deacetylase SRT1</fullName>
        <ecNumber evidence="5 6">2.3.1.286</ecNumber>
    </recommendedName>
    <alternativeName>
        <fullName evidence="8">Regulatory protein SIR2 homolog 1</fullName>
    </alternativeName>
    <alternativeName>
        <fullName evidence="7">SIR2-like protein 1</fullName>
        <shortName evidence="7">OsSIRT1</shortName>
    </alternativeName>
</protein>
<dbReference type="EC" id="2.3.1.286" evidence="5 6"/>
<dbReference type="EMBL" id="AF159133">
    <property type="protein sequence ID" value="AAD42226.1"/>
    <property type="molecule type" value="mRNA"/>
</dbReference>
<dbReference type="EMBL" id="CM000129">
    <property type="protein sequence ID" value="EEC76908.1"/>
    <property type="molecule type" value="Genomic_DNA"/>
</dbReference>
<dbReference type="SMR" id="B8ARK7"/>
<dbReference type="STRING" id="39946.B8ARK7"/>
<dbReference type="HOGENOM" id="CLU_023643_6_4_1"/>
<dbReference type="Proteomes" id="UP000007015">
    <property type="component" value="Chromosome 4"/>
</dbReference>
<dbReference type="GO" id="GO:0005634">
    <property type="term" value="C:nucleus"/>
    <property type="evidence" value="ECO:0007669"/>
    <property type="project" value="UniProtKB-SubCell"/>
</dbReference>
<dbReference type="GO" id="GO:0017136">
    <property type="term" value="F:histone deacetylase activity, NAD-dependent"/>
    <property type="evidence" value="ECO:0007669"/>
    <property type="project" value="TreeGrafter"/>
</dbReference>
<dbReference type="GO" id="GO:0046872">
    <property type="term" value="F:metal ion binding"/>
    <property type="evidence" value="ECO:0007669"/>
    <property type="project" value="UniProtKB-KW"/>
</dbReference>
<dbReference type="GO" id="GO:0070403">
    <property type="term" value="F:NAD+ binding"/>
    <property type="evidence" value="ECO:0007669"/>
    <property type="project" value="InterPro"/>
</dbReference>
<dbReference type="GO" id="GO:0003714">
    <property type="term" value="F:transcription corepressor activity"/>
    <property type="evidence" value="ECO:0007669"/>
    <property type="project" value="TreeGrafter"/>
</dbReference>
<dbReference type="GO" id="GO:0000122">
    <property type="term" value="P:negative regulation of transcription by RNA polymerase II"/>
    <property type="evidence" value="ECO:0007669"/>
    <property type="project" value="TreeGrafter"/>
</dbReference>
<dbReference type="CDD" id="cd01410">
    <property type="entry name" value="SIRT7"/>
    <property type="match status" value="1"/>
</dbReference>
<dbReference type="FunFam" id="3.40.50.1220:FF:000038">
    <property type="entry name" value="NAD-dependent protein deacetylase sirtuin-6 isoform X2"/>
    <property type="match status" value="1"/>
</dbReference>
<dbReference type="FunFam" id="2.20.28.200:FF:000003">
    <property type="entry name" value="NAD-dependent protein deacetylase SRT1"/>
    <property type="match status" value="1"/>
</dbReference>
<dbReference type="Gene3D" id="2.20.28.200">
    <property type="match status" value="1"/>
</dbReference>
<dbReference type="Gene3D" id="3.40.50.1220">
    <property type="entry name" value="TPP-binding domain"/>
    <property type="match status" value="1"/>
</dbReference>
<dbReference type="InterPro" id="IPR029035">
    <property type="entry name" value="DHS-like_NAD/FAD-binding_dom"/>
</dbReference>
<dbReference type="InterPro" id="IPR050134">
    <property type="entry name" value="NAD-dep_sirtuin_deacylases"/>
</dbReference>
<dbReference type="InterPro" id="IPR003000">
    <property type="entry name" value="Sirtuin"/>
</dbReference>
<dbReference type="InterPro" id="IPR026590">
    <property type="entry name" value="Ssirtuin_cat_dom"/>
</dbReference>
<dbReference type="PANTHER" id="PTHR11085">
    <property type="entry name" value="NAD-DEPENDENT PROTEIN DEACYLASE SIRTUIN-5, MITOCHONDRIAL-RELATED"/>
    <property type="match status" value="1"/>
</dbReference>
<dbReference type="PANTHER" id="PTHR11085:SF12">
    <property type="entry name" value="NAD-DEPENDENT PROTEIN DEACYLASE SIRTUIN-6"/>
    <property type="match status" value="1"/>
</dbReference>
<dbReference type="Pfam" id="PF02146">
    <property type="entry name" value="SIR2"/>
    <property type="match status" value="1"/>
</dbReference>
<dbReference type="SUPFAM" id="SSF52467">
    <property type="entry name" value="DHS-like NAD/FAD-binding domain"/>
    <property type="match status" value="1"/>
</dbReference>
<dbReference type="PROSITE" id="PS50305">
    <property type="entry name" value="SIRTUIN"/>
    <property type="match status" value="1"/>
</dbReference>
<gene>
    <name evidence="7" type="primary">SRT1</name>
    <name type="ORF">OsI_15145</name>
</gene>
<keyword id="KW-0479">Metal-binding</keyword>
<keyword id="KW-0520">NAD</keyword>
<keyword id="KW-0539">Nucleus</keyword>
<keyword id="KW-1185">Reference proteome</keyword>
<keyword id="KW-0808">Transferase</keyword>
<keyword id="KW-0862">Zinc</keyword>
<name>SRT1_ORYSI</name>
<comment type="function">
    <text evidence="3 6 9">NAD-dependent protein deacetylase (PubMed:17468215). Has deacetylase activity towards H3K9Ac (PubMed:17468215). May have a function in the safeguard against genome instability and DNA damage to ensure plant cell growth (Probable). May negatively regulate metabolic signal transduction involving methanol and jasmonates during leaf senescence. Required for histone H3K9Ac deacetylation and repression of AP2-1/RSR1 and amylase genes during early seed development. Functions as an epigenetic regulator to repress the expression of glycolytic genes and glycolysis in seedlings. Reduces lysine acetylation of the glycolytic glyceraldehyde-3-phosphate dehydrogenase (GAPDH), which is found to also function as an activator of glycolytic gene expression (By similarity).</text>
</comment>
<comment type="catalytic activity">
    <reaction evidence="5 6">
        <text>N(6)-acetyl-L-lysyl-[protein] + NAD(+) + H2O = 2''-O-acetyl-ADP-D-ribose + nicotinamide + L-lysyl-[protein]</text>
        <dbReference type="Rhea" id="RHEA:43636"/>
        <dbReference type="Rhea" id="RHEA-COMP:9752"/>
        <dbReference type="Rhea" id="RHEA-COMP:10731"/>
        <dbReference type="ChEBI" id="CHEBI:15377"/>
        <dbReference type="ChEBI" id="CHEBI:17154"/>
        <dbReference type="ChEBI" id="CHEBI:29969"/>
        <dbReference type="ChEBI" id="CHEBI:57540"/>
        <dbReference type="ChEBI" id="CHEBI:61930"/>
        <dbReference type="ChEBI" id="CHEBI:83767"/>
        <dbReference type="EC" id="2.3.1.286"/>
    </reaction>
</comment>
<comment type="cofactor">
    <cofactor evidence="1">
        <name>Zn(2+)</name>
        <dbReference type="ChEBI" id="CHEBI:29105"/>
    </cofactor>
    <text evidence="1">Binds 1 zinc ion per subunit.</text>
</comment>
<comment type="subcellular location">
    <subcellularLocation>
        <location evidence="6">Nucleus</location>
    </subcellularLocation>
</comment>
<comment type="disruption phenotype">
    <text evidence="6">Enhances histone H3K9 acetylation on transposable elements and promoters of hypersensitive response (HR)-related genes. This leads to increased HR-related gene expression, hydrogen peroxide production, DNA fragmentation, and programmed cell death.</text>
</comment>
<comment type="similarity">
    <text evidence="8">Belongs to the sirtuin family. Class IV subfamily.</text>
</comment>
<proteinExistence type="evidence at protein level"/>
<sequence length="483" mass="53868">MSLGYAEKLSYREDVGNVGMPEIFDSPELLHKKIEELAVMVRESKHLVVFTGAGISTSSGIPDFRGPKGVWTLQRSGKGVPGASLPFHRAVPTLTHMALVELEKTGRLKFVISQNVDSLHLRSGLPREKLAELHGNSFKEICPSCKKEYLRDFEIETIGLKDTPRRCSDKNCGARLKDTVLDWEDALPPEEMDAAKEQCQTADLVLCLGTSLQITPACNMPLLSLKNGGRVAIVNLQATPKDKKASLVIHGLVDKVIAGVMYMMNLRIPPYIRTDFVQISLRNSVKKKCVRWTLRVTSIHGLRAPLPFLRSVEVSFPERPDMKPVVLKEQPFSLQRETSMNRPFVMLLTFNFSDGCGCSSSSIEWPVDFLKQKDSFVRDRSLVLQELQHAAEHRSRAGQHAILEREGVPRAETSIHALVTNIVRYDTEDSKAAVPMATWMNSNGSLSKRHMDAIGCNPASSKKQKLVATRHRRKGLNPATQKV</sequence>
<reference key="1">
    <citation type="submission" date="1999-06" db="EMBL/GenBank/DDBJ databases">
        <title>The first putative silent information regulatory protein (SIR2-like) in plants.</title>
        <authorList>
            <person name="Yau C.P."/>
            <person name="Zhuang C.X."/>
            <person name="Zee S.Y."/>
        </authorList>
    </citation>
    <scope>NUCLEOTIDE SEQUENCE [MRNA]</scope>
    <source>
        <tissue>Anther</tissue>
    </source>
</reference>
<reference key="2">
    <citation type="journal article" date="2005" name="PLoS Biol.">
        <title>The genomes of Oryza sativa: a history of duplications.</title>
        <authorList>
            <person name="Yu J."/>
            <person name="Wang J."/>
            <person name="Lin W."/>
            <person name="Li S."/>
            <person name="Li H."/>
            <person name="Zhou J."/>
            <person name="Ni P."/>
            <person name="Dong W."/>
            <person name="Hu S."/>
            <person name="Zeng C."/>
            <person name="Zhang J."/>
            <person name="Zhang Y."/>
            <person name="Li R."/>
            <person name="Xu Z."/>
            <person name="Li S."/>
            <person name="Li X."/>
            <person name="Zheng H."/>
            <person name="Cong L."/>
            <person name="Lin L."/>
            <person name="Yin J."/>
            <person name="Geng J."/>
            <person name="Li G."/>
            <person name="Shi J."/>
            <person name="Liu J."/>
            <person name="Lv H."/>
            <person name="Li J."/>
            <person name="Wang J."/>
            <person name="Deng Y."/>
            <person name="Ran L."/>
            <person name="Shi X."/>
            <person name="Wang X."/>
            <person name="Wu Q."/>
            <person name="Li C."/>
            <person name="Ren X."/>
            <person name="Wang J."/>
            <person name="Wang X."/>
            <person name="Li D."/>
            <person name="Liu D."/>
            <person name="Zhang X."/>
            <person name="Ji Z."/>
            <person name="Zhao W."/>
            <person name="Sun Y."/>
            <person name="Zhang Z."/>
            <person name="Bao J."/>
            <person name="Han Y."/>
            <person name="Dong L."/>
            <person name="Ji J."/>
            <person name="Chen P."/>
            <person name="Wu S."/>
            <person name="Liu J."/>
            <person name="Xiao Y."/>
            <person name="Bu D."/>
            <person name="Tan J."/>
            <person name="Yang L."/>
            <person name="Ye C."/>
            <person name="Zhang J."/>
            <person name="Xu J."/>
            <person name="Zhou Y."/>
            <person name="Yu Y."/>
            <person name="Zhang B."/>
            <person name="Zhuang S."/>
            <person name="Wei H."/>
            <person name="Liu B."/>
            <person name="Lei M."/>
            <person name="Yu H."/>
            <person name="Li Y."/>
            <person name="Xu H."/>
            <person name="Wei S."/>
            <person name="He X."/>
            <person name="Fang L."/>
            <person name="Zhang Z."/>
            <person name="Zhang Y."/>
            <person name="Huang X."/>
            <person name="Su Z."/>
            <person name="Tong W."/>
            <person name="Li J."/>
            <person name="Tong Z."/>
            <person name="Li S."/>
            <person name="Ye J."/>
            <person name="Wang L."/>
            <person name="Fang L."/>
            <person name="Lei T."/>
            <person name="Chen C.-S."/>
            <person name="Chen H.-C."/>
            <person name="Xu Z."/>
            <person name="Li H."/>
            <person name="Huang H."/>
            <person name="Zhang F."/>
            <person name="Xu H."/>
            <person name="Li N."/>
            <person name="Zhao C."/>
            <person name="Li S."/>
            <person name="Dong L."/>
            <person name="Huang Y."/>
            <person name="Li L."/>
            <person name="Xi Y."/>
            <person name="Qi Q."/>
            <person name="Li W."/>
            <person name="Zhang B."/>
            <person name="Hu W."/>
            <person name="Zhang Y."/>
            <person name="Tian X."/>
            <person name="Jiao Y."/>
            <person name="Liang X."/>
            <person name="Jin J."/>
            <person name="Gao L."/>
            <person name="Zheng W."/>
            <person name="Hao B."/>
            <person name="Liu S.-M."/>
            <person name="Wang W."/>
            <person name="Yuan L."/>
            <person name="Cao M."/>
            <person name="McDermott J."/>
            <person name="Samudrala R."/>
            <person name="Wang J."/>
            <person name="Wong G.K.-S."/>
            <person name="Yang H."/>
        </authorList>
    </citation>
    <scope>NUCLEOTIDE SEQUENCE [LARGE SCALE GENOMIC DNA]</scope>
    <source>
        <strain>cv. 93-11</strain>
    </source>
</reference>
<reference key="3">
    <citation type="journal article" date="2007" name="Plant Physiol.">
        <title>Down-regulation of a SILENT INFORMATION REGULATOR2-related histone deacetylase gene, OsSRT1, induces DNA fragmentation and cell death in rice.</title>
        <authorList>
            <person name="Huang L."/>
            <person name="Sun Q."/>
            <person name="Qin F."/>
            <person name="Li C."/>
            <person name="Zhao Y."/>
            <person name="Zhou D.X."/>
        </authorList>
    </citation>
    <scope>FUNCTION</scope>
    <scope>CATALYTIC ACTIVITY</scope>
    <scope>SUBCELLULAR LOCATION</scope>
    <scope>DISRUPTION PHENOTYPE</scope>
</reference>
<organism>
    <name type="scientific">Oryza sativa subsp. indica</name>
    <name type="common">Rice</name>
    <dbReference type="NCBI Taxonomy" id="39946"/>
    <lineage>
        <taxon>Eukaryota</taxon>
        <taxon>Viridiplantae</taxon>
        <taxon>Streptophyta</taxon>
        <taxon>Embryophyta</taxon>
        <taxon>Tracheophyta</taxon>
        <taxon>Spermatophyta</taxon>
        <taxon>Magnoliopsida</taxon>
        <taxon>Liliopsida</taxon>
        <taxon>Poales</taxon>
        <taxon>Poaceae</taxon>
        <taxon>BOP clade</taxon>
        <taxon>Oryzoideae</taxon>
        <taxon>Oryzeae</taxon>
        <taxon>Oryzinae</taxon>
        <taxon>Oryza</taxon>
        <taxon>Oryza sativa</taxon>
    </lineage>
</organism>
<accession>B8ARK7</accession>
<accession>Q9XGT1</accession>
<feature type="chain" id="PRO_0000417366" description="NAD-dependent protein deacetylase SRT1">
    <location>
        <begin position="1"/>
        <end position="483"/>
    </location>
</feature>
<feature type="domain" description="Deacetylase sirtuin-type" evidence="5">
    <location>
        <begin position="27"/>
        <end position="270"/>
    </location>
</feature>
<feature type="active site" description="Proton acceptor" evidence="5">
    <location>
        <position position="134"/>
    </location>
</feature>
<feature type="binding site" evidence="4">
    <location>
        <begin position="53"/>
        <end position="57"/>
    </location>
    <ligand>
        <name>NAD(+)</name>
        <dbReference type="ChEBI" id="CHEBI:57540"/>
    </ligand>
</feature>
<feature type="binding site" evidence="4">
    <location>
        <begin position="63"/>
        <end position="65"/>
    </location>
    <ligand>
        <name>NAD(+)</name>
        <dbReference type="ChEBI" id="CHEBI:57540"/>
    </ligand>
</feature>
<feature type="binding site" evidence="4">
    <location>
        <begin position="114"/>
        <end position="117"/>
    </location>
    <ligand>
        <name>NAD(+)</name>
        <dbReference type="ChEBI" id="CHEBI:57540"/>
    </ligand>
</feature>
<feature type="binding site" evidence="5">
    <location>
        <position position="142"/>
    </location>
    <ligand>
        <name>Zn(2+)</name>
        <dbReference type="ChEBI" id="CHEBI:29105"/>
    </ligand>
</feature>
<feature type="binding site" evidence="5">
    <location>
        <position position="145"/>
    </location>
    <ligand>
        <name>Zn(2+)</name>
        <dbReference type="ChEBI" id="CHEBI:29105"/>
    </ligand>
</feature>
<feature type="binding site" evidence="5">
    <location>
        <position position="167"/>
    </location>
    <ligand>
        <name>Zn(2+)</name>
        <dbReference type="ChEBI" id="CHEBI:29105"/>
    </ligand>
</feature>
<feature type="binding site" evidence="5">
    <location>
        <position position="172"/>
    </location>
    <ligand>
        <name>Zn(2+)</name>
        <dbReference type="ChEBI" id="CHEBI:29105"/>
    </ligand>
</feature>
<feature type="binding site" evidence="2">
    <location>
        <begin position="209"/>
        <end position="211"/>
    </location>
    <ligand>
        <name>NAD(+)</name>
        <dbReference type="ChEBI" id="CHEBI:57540"/>
    </ligand>
</feature>
<feature type="binding site" evidence="2">
    <location>
        <begin position="235"/>
        <end position="237"/>
    </location>
    <ligand>
        <name>NAD(+)</name>
        <dbReference type="ChEBI" id="CHEBI:57540"/>
    </ligand>
</feature>
<feature type="sequence conflict" description="In Ref. 1; AAD42226." evidence="8" ref="1">
    <original>G</original>
    <variation>S</variation>
    <location>
        <position position="54"/>
    </location>
</feature>
<feature type="sequence conflict" description="In Ref. 2; EEC76908." evidence="8" ref="2">
    <original>Q</original>
    <variation>QV</variation>
    <location>
        <position position="74"/>
    </location>
</feature>
<feature type="sequence conflict" description="In Ref. 1; AAD42226." evidence="8" ref="1">
    <original>S</original>
    <variation>T</variation>
    <location>
        <position position="84"/>
    </location>
</feature>
<feature type="sequence conflict" description="In Ref. 1; AAD42226." evidence="8" ref="1">
    <original>H</original>
    <variation>Q</variation>
    <location>
        <position position="88"/>
    </location>
</feature>
<feature type="sequence conflict" description="In Ref. 1; AAD42226." evidence="8" ref="1">
    <original>T</original>
    <variation>N</variation>
    <location>
        <position position="469"/>
    </location>
</feature>
<evidence type="ECO:0000250" key="1">
    <source>
        <dbReference type="UniProtKB" id="P06700"/>
    </source>
</evidence>
<evidence type="ECO:0000250" key="2">
    <source>
        <dbReference type="UniProtKB" id="P53686"/>
    </source>
</evidence>
<evidence type="ECO:0000250" key="3">
    <source>
        <dbReference type="UniProtKB" id="Q7XWV4"/>
    </source>
</evidence>
<evidence type="ECO:0000250" key="4">
    <source>
        <dbReference type="UniProtKB" id="Q8IXJ6"/>
    </source>
</evidence>
<evidence type="ECO:0000255" key="5">
    <source>
        <dbReference type="PROSITE-ProRule" id="PRU00236"/>
    </source>
</evidence>
<evidence type="ECO:0000269" key="6">
    <source>
    </source>
</evidence>
<evidence type="ECO:0000303" key="7">
    <source>
    </source>
</evidence>
<evidence type="ECO:0000305" key="8"/>
<evidence type="ECO:0000305" key="9">
    <source>
    </source>
</evidence>